<gene>
    <name evidence="1" type="primary">astE</name>
    <name type="ordered locus">SeAg_B1866</name>
</gene>
<reference key="1">
    <citation type="journal article" date="2011" name="J. Bacteriol.">
        <title>Comparative genomics of 28 Salmonella enterica isolates: evidence for CRISPR-mediated adaptive sublineage evolution.</title>
        <authorList>
            <person name="Fricke W.F."/>
            <person name="Mammel M.K."/>
            <person name="McDermott P.F."/>
            <person name="Tartera C."/>
            <person name="White D.G."/>
            <person name="Leclerc J.E."/>
            <person name="Ravel J."/>
            <person name="Cebula T.A."/>
        </authorList>
    </citation>
    <scope>NUCLEOTIDE SEQUENCE [LARGE SCALE GENOMIC DNA]</scope>
    <source>
        <strain>SL483</strain>
    </source>
</reference>
<feature type="chain" id="PRO_1000133638" description="Succinylglutamate desuccinylase">
    <location>
        <begin position="1"/>
        <end position="322"/>
    </location>
</feature>
<feature type="active site" evidence="1">
    <location>
        <position position="210"/>
    </location>
</feature>
<feature type="binding site" evidence="1">
    <location>
        <position position="53"/>
    </location>
    <ligand>
        <name>Zn(2+)</name>
        <dbReference type="ChEBI" id="CHEBI:29105"/>
    </ligand>
</feature>
<feature type="binding site" evidence="1">
    <location>
        <position position="56"/>
    </location>
    <ligand>
        <name>Zn(2+)</name>
        <dbReference type="ChEBI" id="CHEBI:29105"/>
    </ligand>
</feature>
<feature type="binding site" evidence="1">
    <location>
        <position position="147"/>
    </location>
    <ligand>
        <name>Zn(2+)</name>
        <dbReference type="ChEBI" id="CHEBI:29105"/>
    </ligand>
</feature>
<name>ASTE_SALA4</name>
<accession>B5F7I8</accession>
<comment type="function">
    <text evidence="1">Transforms N(2)-succinylglutamate into succinate and glutamate.</text>
</comment>
<comment type="catalytic activity">
    <reaction evidence="1">
        <text>N-succinyl-L-glutamate + H2O = L-glutamate + succinate</text>
        <dbReference type="Rhea" id="RHEA:15169"/>
        <dbReference type="ChEBI" id="CHEBI:15377"/>
        <dbReference type="ChEBI" id="CHEBI:29985"/>
        <dbReference type="ChEBI" id="CHEBI:30031"/>
        <dbReference type="ChEBI" id="CHEBI:58763"/>
        <dbReference type="EC" id="3.5.1.96"/>
    </reaction>
</comment>
<comment type="cofactor">
    <cofactor evidence="1">
        <name>Zn(2+)</name>
        <dbReference type="ChEBI" id="CHEBI:29105"/>
    </cofactor>
    <text evidence="1">Binds 1 zinc ion per subunit.</text>
</comment>
<comment type="pathway">
    <text evidence="1">Amino-acid degradation; L-arginine degradation via AST pathway; L-glutamate and succinate from L-arginine: step 5/5.</text>
</comment>
<comment type="similarity">
    <text evidence="1">Belongs to the AspA/AstE family. Succinylglutamate desuccinylase subfamily.</text>
</comment>
<proteinExistence type="inferred from homology"/>
<keyword id="KW-0056">Arginine metabolism</keyword>
<keyword id="KW-0378">Hydrolase</keyword>
<keyword id="KW-0479">Metal-binding</keyword>
<keyword id="KW-0862">Zinc</keyword>
<protein>
    <recommendedName>
        <fullName evidence="1">Succinylglutamate desuccinylase</fullName>
        <ecNumber evidence="1">3.5.1.96</ecNumber>
    </recommendedName>
</protein>
<dbReference type="EC" id="3.5.1.96" evidence="1"/>
<dbReference type="EMBL" id="CP001138">
    <property type="protein sequence ID" value="ACH51161.1"/>
    <property type="molecule type" value="Genomic_DNA"/>
</dbReference>
<dbReference type="RefSeq" id="WP_000368450.1">
    <property type="nucleotide sequence ID" value="NC_011149.1"/>
</dbReference>
<dbReference type="SMR" id="B5F7I8"/>
<dbReference type="KEGG" id="sea:SeAg_B1866"/>
<dbReference type="HOGENOM" id="CLU_071608_0_0_6"/>
<dbReference type="UniPathway" id="UPA00185">
    <property type="reaction ID" value="UER00283"/>
</dbReference>
<dbReference type="Proteomes" id="UP000008819">
    <property type="component" value="Chromosome"/>
</dbReference>
<dbReference type="GO" id="GO:0016788">
    <property type="term" value="F:hydrolase activity, acting on ester bonds"/>
    <property type="evidence" value="ECO:0007669"/>
    <property type="project" value="UniProtKB-UniRule"/>
</dbReference>
<dbReference type="GO" id="GO:0009017">
    <property type="term" value="F:succinylglutamate desuccinylase activity"/>
    <property type="evidence" value="ECO:0007669"/>
    <property type="project" value="UniProtKB-EC"/>
</dbReference>
<dbReference type="GO" id="GO:0008270">
    <property type="term" value="F:zinc ion binding"/>
    <property type="evidence" value="ECO:0007669"/>
    <property type="project" value="UniProtKB-UniRule"/>
</dbReference>
<dbReference type="GO" id="GO:0019544">
    <property type="term" value="P:arginine catabolic process to glutamate"/>
    <property type="evidence" value="ECO:0007669"/>
    <property type="project" value="UniProtKB-UniRule"/>
</dbReference>
<dbReference type="GO" id="GO:0019545">
    <property type="term" value="P:arginine catabolic process to succinate"/>
    <property type="evidence" value="ECO:0007669"/>
    <property type="project" value="UniProtKB-UniRule"/>
</dbReference>
<dbReference type="CDD" id="cd03855">
    <property type="entry name" value="M14_ASTE"/>
    <property type="match status" value="1"/>
</dbReference>
<dbReference type="FunFam" id="3.40.630.10:FF:000017">
    <property type="entry name" value="Succinylglutamate desuccinylase"/>
    <property type="match status" value="1"/>
</dbReference>
<dbReference type="Gene3D" id="3.40.630.10">
    <property type="entry name" value="Zn peptidases"/>
    <property type="match status" value="1"/>
</dbReference>
<dbReference type="HAMAP" id="MF_00767">
    <property type="entry name" value="Arg_catab_AstE"/>
    <property type="match status" value="1"/>
</dbReference>
<dbReference type="InterPro" id="IPR050178">
    <property type="entry name" value="AspA/AstE_fam"/>
</dbReference>
<dbReference type="InterPro" id="IPR055438">
    <property type="entry name" value="AstE_AspA_cat"/>
</dbReference>
<dbReference type="InterPro" id="IPR007036">
    <property type="entry name" value="Aste_AspA_hybrid_dom"/>
</dbReference>
<dbReference type="InterPro" id="IPR016681">
    <property type="entry name" value="SuccinylGlu_desuccinylase"/>
</dbReference>
<dbReference type="NCBIfam" id="TIGR03242">
    <property type="entry name" value="arg_catab_astE"/>
    <property type="match status" value="1"/>
</dbReference>
<dbReference type="NCBIfam" id="NF003706">
    <property type="entry name" value="PRK05324.1"/>
    <property type="match status" value="1"/>
</dbReference>
<dbReference type="PANTHER" id="PTHR15162">
    <property type="entry name" value="ASPARTOACYLASE"/>
    <property type="match status" value="1"/>
</dbReference>
<dbReference type="PANTHER" id="PTHR15162:SF7">
    <property type="entry name" value="SUCCINYLGLUTAMATE DESUCCINYLASE"/>
    <property type="match status" value="1"/>
</dbReference>
<dbReference type="Pfam" id="PF24827">
    <property type="entry name" value="AstE_AspA_cat"/>
    <property type="match status" value="1"/>
</dbReference>
<dbReference type="Pfam" id="PF04952">
    <property type="entry name" value="AstE_AspA_hybrid"/>
    <property type="match status" value="1"/>
</dbReference>
<dbReference type="PIRSF" id="PIRSF017020">
    <property type="entry name" value="AstE"/>
    <property type="match status" value="1"/>
</dbReference>
<dbReference type="SUPFAM" id="SSF53187">
    <property type="entry name" value="Zn-dependent exopeptidases"/>
    <property type="match status" value="1"/>
</dbReference>
<sequence length="322" mass="35513">MDNFLALTLSGTTPRVTQGKGAGFRWRWLGHGLLELTPDAPVDRALILSAGIHGNETAPVEMLDKLLSALYSGSLTLTWRMLVVLGNPQALAAGIRYCHSDMNRMFGGRWQSFAESDETRRARELELSLETFFSSGQARVRWHLDLHTAIRGSHHLRFGVLPQRDRPWETDFLAWLGAAGLEALVFHQAPGGTFTHFSSEHFGALSCTLELGKALPFGQNDLTQFNVTSQALSALLSGVETSTSSSPPLRYRVVSQITRHSDKFALYMDAQTLNFTAFAKGTLLAEEGDKRVTVTHDVEYVLFPNPSVACGLRAGLMLERLP</sequence>
<organism>
    <name type="scientific">Salmonella agona (strain SL483)</name>
    <dbReference type="NCBI Taxonomy" id="454166"/>
    <lineage>
        <taxon>Bacteria</taxon>
        <taxon>Pseudomonadati</taxon>
        <taxon>Pseudomonadota</taxon>
        <taxon>Gammaproteobacteria</taxon>
        <taxon>Enterobacterales</taxon>
        <taxon>Enterobacteriaceae</taxon>
        <taxon>Salmonella</taxon>
    </lineage>
</organism>
<evidence type="ECO:0000255" key="1">
    <source>
        <dbReference type="HAMAP-Rule" id="MF_00767"/>
    </source>
</evidence>